<comment type="function">
    <text evidence="1">Catalyzes the attachment of alanine to tRNA(Ala) in a two-step reaction: alanine is first activated by ATP to form Ala-AMP and then transferred to the acceptor end of tRNA(Ala). Also edits incorrectly charged Ser-tRNA(Ala) and Gly-tRNA(Ala) via its editing domain.</text>
</comment>
<comment type="catalytic activity">
    <reaction evidence="1">
        <text>tRNA(Ala) + L-alanine + ATP = L-alanyl-tRNA(Ala) + AMP + diphosphate</text>
        <dbReference type="Rhea" id="RHEA:12540"/>
        <dbReference type="Rhea" id="RHEA-COMP:9657"/>
        <dbReference type="Rhea" id="RHEA-COMP:9923"/>
        <dbReference type="ChEBI" id="CHEBI:30616"/>
        <dbReference type="ChEBI" id="CHEBI:33019"/>
        <dbReference type="ChEBI" id="CHEBI:57972"/>
        <dbReference type="ChEBI" id="CHEBI:78442"/>
        <dbReference type="ChEBI" id="CHEBI:78497"/>
        <dbReference type="ChEBI" id="CHEBI:456215"/>
        <dbReference type="EC" id="6.1.1.7"/>
    </reaction>
</comment>
<comment type="cofactor">
    <cofactor evidence="1">
        <name>Zn(2+)</name>
        <dbReference type="ChEBI" id="CHEBI:29105"/>
    </cofactor>
    <text evidence="1">Binds 1 zinc ion per subunit.</text>
</comment>
<comment type="subcellular location">
    <subcellularLocation>
        <location evidence="1">Cytoplasm</location>
    </subcellularLocation>
</comment>
<comment type="domain">
    <text evidence="1">Consists of three domains; the N-terminal catalytic domain, the editing domain and the C-terminal C-Ala domain. The editing domain removes incorrectly charged amino acids, while the C-Ala domain, along with tRNA(Ala), serves as a bridge to cooperatively bring together the editing and aminoacylation centers thus stimulating deacylation of misacylated tRNAs.</text>
</comment>
<comment type="similarity">
    <text evidence="1">Belongs to the class-II aminoacyl-tRNA synthetase family.</text>
</comment>
<reference key="1">
    <citation type="submission" date="2005-11" db="EMBL/GenBank/DDBJ databases">
        <title>The complete genome sequence of Lawsonia intracellularis: the causative agent of proliferative enteropathy.</title>
        <authorList>
            <person name="Kaur K."/>
            <person name="Zhang Q."/>
            <person name="Beckler D."/>
            <person name="Munir S."/>
            <person name="Li L."/>
            <person name="Kinsley K."/>
            <person name="Herron L."/>
            <person name="Peterson A."/>
            <person name="May B."/>
            <person name="Singh S."/>
            <person name="Gebhart C."/>
            <person name="Kapur V."/>
        </authorList>
    </citation>
    <scope>NUCLEOTIDE SEQUENCE [LARGE SCALE GENOMIC DNA]</scope>
    <source>
        <strain>PHE/MN1-00</strain>
    </source>
</reference>
<keyword id="KW-0030">Aminoacyl-tRNA synthetase</keyword>
<keyword id="KW-0067">ATP-binding</keyword>
<keyword id="KW-0963">Cytoplasm</keyword>
<keyword id="KW-0436">Ligase</keyword>
<keyword id="KW-0479">Metal-binding</keyword>
<keyword id="KW-0547">Nucleotide-binding</keyword>
<keyword id="KW-0648">Protein biosynthesis</keyword>
<keyword id="KW-1185">Reference proteome</keyword>
<keyword id="KW-0694">RNA-binding</keyword>
<keyword id="KW-0820">tRNA-binding</keyword>
<keyword id="KW-0862">Zinc</keyword>
<proteinExistence type="inferred from homology"/>
<feature type="chain" id="PRO_0000347653" description="Alanine--tRNA ligase">
    <location>
        <begin position="1"/>
        <end position="884"/>
    </location>
</feature>
<feature type="binding site" evidence="1">
    <location>
        <position position="570"/>
    </location>
    <ligand>
        <name>Zn(2+)</name>
        <dbReference type="ChEBI" id="CHEBI:29105"/>
    </ligand>
</feature>
<feature type="binding site" evidence="1">
    <location>
        <position position="574"/>
    </location>
    <ligand>
        <name>Zn(2+)</name>
        <dbReference type="ChEBI" id="CHEBI:29105"/>
    </ligand>
</feature>
<feature type="binding site" evidence="1">
    <location>
        <position position="676"/>
    </location>
    <ligand>
        <name>Zn(2+)</name>
        <dbReference type="ChEBI" id="CHEBI:29105"/>
    </ligand>
</feature>
<feature type="binding site" evidence="1">
    <location>
        <position position="680"/>
    </location>
    <ligand>
        <name>Zn(2+)</name>
        <dbReference type="ChEBI" id="CHEBI:29105"/>
    </ligand>
</feature>
<gene>
    <name evidence="1" type="primary">alaS</name>
    <name type="ordered locus">LI1181</name>
</gene>
<name>SYA_LAWIP</name>
<evidence type="ECO:0000255" key="1">
    <source>
        <dbReference type="HAMAP-Rule" id="MF_00036"/>
    </source>
</evidence>
<organism>
    <name type="scientific">Lawsonia intracellularis (strain PHE/MN1-00)</name>
    <dbReference type="NCBI Taxonomy" id="363253"/>
    <lineage>
        <taxon>Bacteria</taxon>
        <taxon>Pseudomonadati</taxon>
        <taxon>Thermodesulfobacteriota</taxon>
        <taxon>Desulfovibrionia</taxon>
        <taxon>Desulfovibrionales</taxon>
        <taxon>Desulfovibrionaceae</taxon>
        <taxon>Lawsonia</taxon>
    </lineage>
</organism>
<accession>Q1MP42</accession>
<dbReference type="EC" id="6.1.1.7" evidence="1"/>
<dbReference type="EMBL" id="AM180252">
    <property type="protein sequence ID" value="CAJ55235.1"/>
    <property type="molecule type" value="Genomic_DNA"/>
</dbReference>
<dbReference type="RefSeq" id="WP_011527259.1">
    <property type="nucleotide sequence ID" value="NC_008011.1"/>
</dbReference>
<dbReference type="SMR" id="Q1MP42"/>
<dbReference type="STRING" id="363253.LI1181"/>
<dbReference type="KEGG" id="lip:LI1181"/>
<dbReference type="eggNOG" id="COG0013">
    <property type="taxonomic scope" value="Bacteria"/>
</dbReference>
<dbReference type="HOGENOM" id="CLU_004485_1_1_7"/>
<dbReference type="OrthoDB" id="9803884at2"/>
<dbReference type="Proteomes" id="UP000002430">
    <property type="component" value="Chromosome"/>
</dbReference>
<dbReference type="GO" id="GO:0005829">
    <property type="term" value="C:cytosol"/>
    <property type="evidence" value="ECO:0007669"/>
    <property type="project" value="TreeGrafter"/>
</dbReference>
<dbReference type="GO" id="GO:0004813">
    <property type="term" value="F:alanine-tRNA ligase activity"/>
    <property type="evidence" value="ECO:0007669"/>
    <property type="project" value="UniProtKB-UniRule"/>
</dbReference>
<dbReference type="GO" id="GO:0002161">
    <property type="term" value="F:aminoacyl-tRNA deacylase activity"/>
    <property type="evidence" value="ECO:0007669"/>
    <property type="project" value="TreeGrafter"/>
</dbReference>
<dbReference type="GO" id="GO:0005524">
    <property type="term" value="F:ATP binding"/>
    <property type="evidence" value="ECO:0007669"/>
    <property type="project" value="UniProtKB-UniRule"/>
</dbReference>
<dbReference type="GO" id="GO:0000049">
    <property type="term" value="F:tRNA binding"/>
    <property type="evidence" value="ECO:0007669"/>
    <property type="project" value="UniProtKB-KW"/>
</dbReference>
<dbReference type="GO" id="GO:0008270">
    <property type="term" value="F:zinc ion binding"/>
    <property type="evidence" value="ECO:0007669"/>
    <property type="project" value="UniProtKB-UniRule"/>
</dbReference>
<dbReference type="GO" id="GO:0006419">
    <property type="term" value="P:alanyl-tRNA aminoacylation"/>
    <property type="evidence" value="ECO:0007669"/>
    <property type="project" value="UniProtKB-UniRule"/>
</dbReference>
<dbReference type="GO" id="GO:0045892">
    <property type="term" value="P:negative regulation of DNA-templated transcription"/>
    <property type="evidence" value="ECO:0007669"/>
    <property type="project" value="TreeGrafter"/>
</dbReference>
<dbReference type="CDD" id="cd00673">
    <property type="entry name" value="AlaRS_core"/>
    <property type="match status" value="1"/>
</dbReference>
<dbReference type="FunFam" id="3.10.310.40:FF:000001">
    <property type="entry name" value="Alanine--tRNA ligase"/>
    <property type="match status" value="1"/>
</dbReference>
<dbReference type="FunFam" id="3.30.930.10:FF:000004">
    <property type="entry name" value="Alanine--tRNA ligase"/>
    <property type="match status" value="1"/>
</dbReference>
<dbReference type="FunFam" id="3.30.980.10:FF:000004">
    <property type="entry name" value="Alanine--tRNA ligase, cytoplasmic"/>
    <property type="match status" value="1"/>
</dbReference>
<dbReference type="Gene3D" id="2.40.30.130">
    <property type="match status" value="1"/>
</dbReference>
<dbReference type="Gene3D" id="3.10.310.40">
    <property type="match status" value="1"/>
</dbReference>
<dbReference type="Gene3D" id="3.30.54.20">
    <property type="match status" value="1"/>
</dbReference>
<dbReference type="Gene3D" id="6.10.250.550">
    <property type="match status" value="1"/>
</dbReference>
<dbReference type="Gene3D" id="3.30.930.10">
    <property type="entry name" value="Bira Bifunctional Protein, Domain 2"/>
    <property type="match status" value="1"/>
</dbReference>
<dbReference type="Gene3D" id="3.30.980.10">
    <property type="entry name" value="Threonyl-trna Synthetase, Chain A, domain 2"/>
    <property type="match status" value="1"/>
</dbReference>
<dbReference type="HAMAP" id="MF_00036_B">
    <property type="entry name" value="Ala_tRNA_synth_B"/>
    <property type="match status" value="1"/>
</dbReference>
<dbReference type="InterPro" id="IPR045864">
    <property type="entry name" value="aa-tRNA-synth_II/BPL/LPL"/>
</dbReference>
<dbReference type="InterPro" id="IPR002318">
    <property type="entry name" value="Ala-tRNA-lgiase_IIc"/>
</dbReference>
<dbReference type="InterPro" id="IPR018162">
    <property type="entry name" value="Ala-tRNA-ligase_IIc_anticod-bd"/>
</dbReference>
<dbReference type="InterPro" id="IPR018165">
    <property type="entry name" value="Ala-tRNA-synth_IIc_core"/>
</dbReference>
<dbReference type="InterPro" id="IPR018164">
    <property type="entry name" value="Ala-tRNA-synth_IIc_N"/>
</dbReference>
<dbReference type="InterPro" id="IPR050058">
    <property type="entry name" value="Ala-tRNA_ligase"/>
</dbReference>
<dbReference type="InterPro" id="IPR023033">
    <property type="entry name" value="Ala_tRNA_ligase_euk/bac"/>
</dbReference>
<dbReference type="InterPro" id="IPR003156">
    <property type="entry name" value="DHHA1_dom"/>
</dbReference>
<dbReference type="InterPro" id="IPR018163">
    <property type="entry name" value="Thr/Ala-tRNA-synth_IIc_edit"/>
</dbReference>
<dbReference type="InterPro" id="IPR009000">
    <property type="entry name" value="Transl_B-barrel_sf"/>
</dbReference>
<dbReference type="InterPro" id="IPR012947">
    <property type="entry name" value="tRNA_SAD"/>
</dbReference>
<dbReference type="NCBIfam" id="TIGR00344">
    <property type="entry name" value="alaS"/>
    <property type="match status" value="1"/>
</dbReference>
<dbReference type="PANTHER" id="PTHR11777:SF9">
    <property type="entry name" value="ALANINE--TRNA LIGASE, CYTOPLASMIC"/>
    <property type="match status" value="1"/>
</dbReference>
<dbReference type="PANTHER" id="PTHR11777">
    <property type="entry name" value="ALANYL-TRNA SYNTHETASE"/>
    <property type="match status" value="1"/>
</dbReference>
<dbReference type="Pfam" id="PF02272">
    <property type="entry name" value="DHHA1"/>
    <property type="match status" value="1"/>
</dbReference>
<dbReference type="Pfam" id="PF01411">
    <property type="entry name" value="tRNA-synt_2c"/>
    <property type="match status" value="1"/>
</dbReference>
<dbReference type="Pfam" id="PF07973">
    <property type="entry name" value="tRNA_SAD"/>
    <property type="match status" value="1"/>
</dbReference>
<dbReference type="PRINTS" id="PR00980">
    <property type="entry name" value="TRNASYNTHALA"/>
</dbReference>
<dbReference type="SMART" id="SM00863">
    <property type="entry name" value="tRNA_SAD"/>
    <property type="match status" value="1"/>
</dbReference>
<dbReference type="SUPFAM" id="SSF55681">
    <property type="entry name" value="Class II aaRS and biotin synthetases"/>
    <property type="match status" value="1"/>
</dbReference>
<dbReference type="SUPFAM" id="SSF101353">
    <property type="entry name" value="Putative anticodon-binding domain of alanyl-tRNA synthetase (AlaRS)"/>
    <property type="match status" value="1"/>
</dbReference>
<dbReference type="SUPFAM" id="SSF55186">
    <property type="entry name" value="ThrRS/AlaRS common domain"/>
    <property type="match status" value="1"/>
</dbReference>
<dbReference type="SUPFAM" id="SSF50447">
    <property type="entry name" value="Translation proteins"/>
    <property type="match status" value="1"/>
</dbReference>
<dbReference type="PROSITE" id="PS50860">
    <property type="entry name" value="AA_TRNA_LIGASE_II_ALA"/>
    <property type="match status" value="1"/>
</dbReference>
<protein>
    <recommendedName>
        <fullName evidence="1">Alanine--tRNA ligase</fullName>
        <ecNumber evidence="1">6.1.1.7</ecNumber>
    </recommendedName>
    <alternativeName>
        <fullName evidence="1">Alanyl-tRNA synthetase</fullName>
        <shortName evidence="1">AlaRS</shortName>
    </alternativeName>
</protein>
<sequence length="884" mass="98810">MLTVNDIRQKFLGYFKNYNHQEIPSSSLIPRDDPSLLFTNAGMVQFKKVFTGQETRNYLRATTAQKCLRVGGKHNDLENVGRTARHHTFFEMLGNFSFGDYFKKEAIQFAWAFITEELNLSKEFLYITIYKDDDDAYDIWVNTIGVEPSRIYRMGEKDNFWSMGDTGPCGPCSEIHFDQGETFCCGDNCGIGSCDCDRFLEIWNLVFMQYEQLPSGERVILPKPSIDTGMGLERIVAICQQKSSNYDTDLFQPIIQYMASIAGVHYKKHEETDIALRVIADHSRAIAFMIADGILPSNEGRGYVLRRLIRRAFRFGKQIGMNQPFLYKTVNKVVELMGDIYTELYSRSEFMSRVVFDEEERFSITLDKGLILLEAELNALKEKNTKELPGDIAFKLYDTYGFPLDIINDIASKKHFAVDEANFQHLMQEQKERARSQWKGSGEKRIEACFQTLLEDGMQSEFIGYENLSGTGRIVALLDIDGLPIEELPTKSSGYVITDMTPFYGTSGGQTGDIGILSTITGKTQVVDTLKPATNLIVHVVTVTSGTILLDQEALLVVSESERLDTARNHTCTHILQSVLQKILGDHVRQAGSLVSPTRLRFDFTHIAPLTEEEIHAIELQVNTIIMANLPLRVEFMDQQSALEKGAMALFEEKYGNIVRVVTIGSENQTASIELCGGTHLTSTGQAGCFIIVSETGIAAGVRRIEAITGRNTLAYIKEYQKELSTTAAILKTKPEKVVEKVTSILSENKNLQKTVDTLESSSLSNQGKHLLDNLTRINNIDVLTANLKNFSLKALRDIMDDIRSKLSSGIVCLASTEGTKVHLLLYVSKDLHHNFTASELIKKIVVPIHGAGGGRPDQAQAGGTNPSGLSETFELLKNILEDQ</sequence>